<name>ERA_ACTPJ</name>
<comment type="function">
    <text evidence="1">An essential GTPase that binds both GDP and GTP, with rapid nucleotide exchange. Plays a role in 16S rRNA processing and 30S ribosomal subunit biogenesis and possibly also in cell cycle regulation and energy metabolism.</text>
</comment>
<comment type="subunit">
    <text evidence="1">Monomer.</text>
</comment>
<comment type="subcellular location">
    <subcellularLocation>
        <location>Cytoplasm</location>
    </subcellularLocation>
    <subcellularLocation>
        <location evidence="1">Cell inner membrane</location>
        <topology evidence="1">Peripheral membrane protein</topology>
    </subcellularLocation>
</comment>
<comment type="similarity">
    <text evidence="1 2">Belongs to the TRAFAC class TrmE-Era-EngA-EngB-Septin-like GTPase superfamily. Era GTPase family.</text>
</comment>
<sequence length="304" mass="34808">MTEQNQQPKTYCGFIAIVGRPNVGKSTLLNKILGQKISITSRKAQTTRHRIVGIHTEDQYQAIYVDTPGLHIEEKRAINRLMNRAASSAIGDVDLIIFVVEGTKWTDDDEMVLNKLRAAKAPVVLAINKVDNIKEKDELLPHITELSQKFDFAEILPISAQRGKNVHILQKIVRKSLREGVHHFPEEYVTDRSQRFMASEIIREKLMRFTGEELPYSVTVEIEQFKLNERGTYEINGLILVEREGQKKMVIGVKGQKIKTIGMEARADMERLFDNKVHLELWVKVKAGWADDERALRSLGYMDE</sequence>
<proteinExistence type="inferred from homology"/>
<protein>
    <recommendedName>
        <fullName evidence="1">GTPase Era</fullName>
    </recommendedName>
</protein>
<gene>
    <name evidence="1" type="primary">era</name>
    <name type="ordered locus">APJL_0537</name>
</gene>
<organism>
    <name type="scientific">Actinobacillus pleuropneumoniae serotype 3 (strain JL03)</name>
    <dbReference type="NCBI Taxonomy" id="434271"/>
    <lineage>
        <taxon>Bacteria</taxon>
        <taxon>Pseudomonadati</taxon>
        <taxon>Pseudomonadota</taxon>
        <taxon>Gammaproteobacteria</taxon>
        <taxon>Pasteurellales</taxon>
        <taxon>Pasteurellaceae</taxon>
        <taxon>Actinobacillus</taxon>
    </lineage>
</organism>
<reference key="1">
    <citation type="journal article" date="2008" name="PLoS ONE">
        <title>Genome biology of Actinobacillus pleuropneumoniae JL03, an isolate of serotype 3 prevalent in China.</title>
        <authorList>
            <person name="Xu Z."/>
            <person name="Zhou Y."/>
            <person name="Li L."/>
            <person name="Zhou R."/>
            <person name="Xiao S."/>
            <person name="Wan Y."/>
            <person name="Zhang S."/>
            <person name="Wang K."/>
            <person name="Li W."/>
            <person name="Li L."/>
            <person name="Jin H."/>
            <person name="Kang M."/>
            <person name="Dalai B."/>
            <person name="Li T."/>
            <person name="Liu L."/>
            <person name="Cheng Y."/>
            <person name="Zhang L."/>
            <person name="Xu T."/>
            <person name="Zheng H."/>
            <person name="Pu S."/>
            <person name="Wang B."/>
            <person name="Gu W."/>
            <person name="Zhang X.L."/>
            <person name="Zhu G.-F."/>
            <person name="Wang S."/>
            <person name="Zhao G.-P."/>
            <person name="Chen H."/>
        </authorList>
    </citation>
    <scope>NUCLEOTIDE SEQUENCE [LARGE SCALE GENOMIC DNA]</scope>
    <source>
        <strain>JL03</strain>
    </source>
</reference>
<feature type="chain" id="PRO_1000121297" description="GTPase Era">
    <location>
        <begin position="1"/>
        <end position="304"/>
    </location>
</feature>
<feature type="domain" description="Era-type G" evidence="2">
    <location>
        <begin position="11"/>
        <end position="179"/>
    </location>
</feature>
<feature type="domain" description="KH type-2" evidence="1">
    <location>
        <begin position="210"/>
        <end position="287"/>
    </location>
</feature>
<feature type="region of interest" description="G1" evidence="2">
    <location>
        <begin position="19"/>
        <end position="26"/>
    </location>
</feature>
<feature type="region of interest" description="G2" evidence="2">
    <location>
        <begin position="45"/>
        <end position="49"/>
    </location>
</feature>
<feature type="region of interest" description="G3" evidence="2">
    <location>
        <begin position="66"/>
        <end position="69"/>
    </location>
</feature>
<feature type="region of interest" description="G4" evidence="2">
    <location>
        <begin position="128"/>
        <end position="131"/>
    </location>
</feature>
<feature type="region of interest" description="G5" evidence="2">
    <location>
        <begin position="158"/>
        <end position="160"/>
    </location>
</feature>
<feature type="binding site" evidence="1">
    <location>
        <begin position="19"/>
        <end position="26"/>
    </location>
    <ligand>
        <name>GTP</name>
        <dbReference type="ChEBI" id="CHEBI:37565"/>
    </ligand>
</feature>
<feature type="binding site" evidence="1">
    <location>
        <begin position="66"/>
        <end position="70"/>
    </location>
    <ligand>
        <name>GTP</name>
        <dbReference type="ChEBI" id="CHEBI:37565"/>
    </ligand>
</feature>
<feature type="binding site" evidence="1">
    <location>
        <begin position="128"/>
        <end position="131"/>
    </location>
    <ligand>
        <name>GTP</name>
        <dbReference type="ChEBI" id="CHEBI:37565"/>
    </ligand>
</feature>
<evidence type="ECO:0000255" key="1">
    <source>
        <dbReference type="HAMAP-Rule" id="MF_00367"/>
    </source>
</evidence>
<evidence type="ECO:0000255" key="2">
    <source>
        <dbReference type="PROSITE-ProRule" id="PRU01050"/>
    </source>
</evidence>
<accession>B0BUA7</accession>
<dbReference type="EMBL" id="CP000687">
    <property type="protein sequence ID" value="ABY69112.1"/>
    <property type="molecule type" value="Genomic_DNA"/>
</dbReference>
<dbReference type="RefSeq" id="WP_012262846.1">
    <property type="nucleotide sequence ID" value="NC_010278.1"/>
</dbReference>
<dbReference type="SMR" id="B0BUA7"/>
<dbReference type="KEGG" id="apj:APJL_0537"/>
<dbReference type="HOGENOM" id="CLU_038009_1_0_6"/>
<dbReference type="Proteomes" id="UP000008547">
    <property type="component" value="Chromosome"/>
</dbReference>
<dbReference type="GO" id="GO:0005829">
    <property type="term" value="C:cytosol"/>
    <property type="evidence" value="ECO:0007669"/>
    <property type="project" value="TreeGrafter"/>
</dbReference>
<dbReference type="GO" id="GO:0005886">
    <property type="term" value="C:plasma membrane"/>
    <property type="evidence" value="ECO:0007669"/>
    <property type="project" value="UniProtKB-SubCell"/>
</dbReference>
<dbReference type="GO" id="GO:0005525">
    <property type="term" value="F:GTP binding"/>
    <property type="evidence" value="ECO:0007669"/>
    <property type="project" value="UniProtKB-UniRule"/>
</dbReference>
<dbReference type="GO" id="GO:0003924">
    <property type="term" value="F:GTPase activity"/>
    <property type="evidence" value="ECO:0007669"/>
    <property type="project" value="UniProtKB-UniRule"/>
</dbReference>
<dbReference type="GO" id="GO:0043024">
    <property type="term" value="F:ribosomal small subunit binding"/>
    <property type="evidence" value="ECO:0007669"/>
    <property type="project" value="TreeGrafter"/>
</dbReference>
<dbReference type="GO" id="GO:0070181">
    <property type="term" value="F:small ribosomal subunit rRNA binding"/>
    <property type="evidence" value="ECO:0007669"/>
    <property type="project" value="UniProtKB-UniRule"/>
</dbReference>
<dbReference type="GO" id="GO:0000028">
    <property type="term" value="P:ribosomal small subunit assembly"/>
    <property type="evidence" value="ECO:0007669"/>
    <property type="project" value="TreeGrafter"/>
</dbReference>
<dbReference type="CDD" id="cd04163">
    <property type="entry name" value="Era"/>
    <property type="match status" value="1"/>
</dbReference>
<dbReference type="CDD" id="cd22534">
    <property type="entry name" value="KH-II_Era"/>
    <property type="match status" value="1"/>
</dbReference>
<dbReference type="FunFam" id="3.30.300.20:FF:000003">
    <property type="entry name" value="GTPase Era"/>
    <property type="match status" value="1"/>
</dbReference>
<dbReference type="FunFam" id="3.40.50.300:FF:000094">
    <property type="entry name" value="GTPase Era"/>
    <property type="match status" value="1"/>
</dbReference>
<dbReference type="Gene3D" id="3.30.300.20">
    <property type="match status" value="1"/>
</dbReference>
<dbReference type="Gene3D" id="3.40.50.300">
    <property type="entry name" value="P-loop containing nucleotide triphosphate hydrolases"/>
    <property type="match status" value="1"/>
</dbReference>
<dbReference type="HAMAP" id="MF_00367">
    <property type="entry name" value="GTPase_Era"/>
    <property type="match status" value="1"/>
</dbReference>
<dbReference type="InterPro" id="IPR030388">
    <property type="entry name" value="G_ERA_dom"/>
</dbReference>
<dbReference type="InterPro" id="IPR006073">
    <property type="entry name" value="GTP-bd"/>
</dbReference>
<dbReference type="InterPro" id="IPR005662">
    <property type="entry name" value="GTPase_Era-like"/>
</dbReference>
<dbReference type="InterPro" id="IPR015946">
    <property type="entry name" value="KH_dom-like_a/b"/>
</dbReference>
<dbReference type="InterPro" id="IPR004044">
    <property type="entry name" value="KH_dom_type_2"/>
</dbReference>
<dbReference type="InterPro" id="IPR009019">
    <property type="entry name" value="KH_sf_prok-type"/>
</dbReference>
<dbReference type="InterPro" id="IPR027417">
    <property type="entry name" value="P-loop_NTPase"/>
</dbReference>
<dbReference type="InterPro" id="IPR005225">
    <property type="entry name" value="Small_GTP-bd"/>
</dbReference>
<dbReference type="NCBIfam" id="TIGR00436">
    <property type="entry name" value="era"/>
    <property type="match status" value="1"/>
</dbReference>
<dbReference type="NCBIfam" id="NF000908">
    <property type="entry name" value="PRK00089.1"/>
    <property type="match status" value="1"/>
</dbReference>
<dbReference type="NCBIfam" id="TIGR00231">
    <property type="entry name" value="small_GTP"/>
    <property type="match status" value="1"/>
</dbReference>
<dbReference type="PANTHER" id="PTHR42698">
    <property type="entry name" value="GTPASE ERA"/>
    <property type="match status" value="1"/>
</dbReference>
<dbReference type="PANTHER" id="PTHR42698:SF1">
    <property type="entry name" value="GTPASE ERA, MITOCHONDRIAL"/>
    <property type="match status" value="1"/>
</dbReference>
<dbReference type="Pfam" id="PF07650">
    <property type="entry name" value="KH_2"/>
    <property type="match status" value="1"/>
</dbReference>
<dbReference type="Pfam" id="PF01926">
    <property type="entry name" value="MMR_HSR1"/>
    <property type="match status" value="1"/>
</dbReference>
<dbReference type="PRINTS" id="PR00326">
    <property type="entry name" value="GTP1OBG"/>
</dbReference>
<dbReference type="SUPFAM" id="SSF52540">
    <property type="entry name" value="P-loop containing nucleoside triphosphate hydrolases"/>
    <property type="match status" value="1"/>
</dbReference>
<dbReference type="SUPFAM" id="SSF54814">
    <property type="entry name" value="Prokaryotic type KH domain (KH-domain type II)"/>
    <property type="match status" value="1"/>
</dbReference>
<dbReference type="PROSITE" id="PS51713">
    <property type="entry name" value="G_ERA"/>
    <property type="match status" value="1"/>
</dbReference>
<dbReference type="PROSITE" id="PS50823">
    <property type="entry name" value="KH_TYPE_2"/>
    <property type="match status" value="1"/>
</dbReference>
<keyword id="KW-0997">Cell inner membrane</keyword>
<keyword id="KW-1003">Cell membrane</keyword>
<keyword id="KW-0963">Cytoplasm</keyword>
<keyword id="KW-0342">GTP-binding</keyword>
<keyword id="KW-0472">Membrane</keyword>
<keyword id="KW-0547">Nucleotide-binding</keyword>
<keyword id="KW-0690">Ribosome biogenesis</keyword>
<keyword id="KW-0694">RNA-binding</keyword>
<keyword id="KW-0699">rRNA-binding</keyword>